<reference key="1">
    <citation type="journal article" date="1998" name="Nature">
        <title>The complete genome of the hyperthermophilic bacterium Aquifex aeolicus.</title>
        <authorList>
            <person name="Deckert G."/>
            <person name="Warren P.V."/>
            <person name="Gaasterland T."/>
            <person name="Young W.G."/>
            <person name="Lenox A.L."/>
            <person name="Graham D.E."/>
            <person name="Overbeek R."/>
            <person name="Snead M.A."/>
            <person name="Keller M."/>
            <person name="Aujay M."/>
            <person name="Huber R."/>
            <person name="Feldman R.A."/>
            <person name="Short J.M."/>
            <person name="Olsen G.J."/>
            <person name="Swanson R.V."/>
        </authorList>
    </citation>
    <scope>NUCLEOTIDE SEQUENCE [LARGE SCALE GENOMIC DNA]</scope>
    <source>
        <strain>VF5</strain>
    </source>
</reference>
<reference key="2">
    <citation type="submission" date="2007-08" db="PDB data bank">
        <title>Crystal structure of 3-oxoacyl-[acyl-carrier-protein] synthase III from Aquifex aeolicus VF5.</title>
        <authorList>
            <consortium name="RIKEN structural genomics initiative (RSGI)"/>
        </authorList>
    </citation>
    <scope>X-RAY CRYSTALLOGRAPHY (2.1 ANGSTROMS)</scope>
    <source>
        <strain>VF5</strain>
    </source>
</reference>
<protein>
    <recommendedName>
        <fullName evidence="1">Beta-ketoacyl-[acyl-carrier-protein] synthase III</fullName>
        <shortName evidence="1">Beta-ketoacyl-ACP synthase III</shortName>
        <shortName evidence="1">KAS III</shortName>
        <ecNumber evidence="1">2.3.1.180</ecNumber>
    </recommendedName>
    <alternativeName>
        <fullName evidence="1">3-oxoacyl-[acyl-carrier-protein] synthase 3</fullName>
    </alternativeName>
    <alternativeName>
        <fullName evidence="1">3-oxoacyl-[acyl-carrier-protein] synthase III</fullName>
    </alternativeName>
</protein>
<proteinExistence type="evidence at protein level"/>
<sequence length="309" mass="33825">MGTKIIGTGVYLPKNVLTNFDLEKIVDTSDEWITTRTGIKERRIAKEETITYMATQAAKEALREANLSPEELDLIILATLTPQKRFPSTACLVQAQLKAKGVYAFDISAACSGFIYALDIADSFIKSGKAKNVLVIGAEKLSEAVDWEDRSTCVLFGDGAGAVVVTRSEDKSDILATRMYAEGSLEELLHADNCGYIRMKGRELFKVAVRSMEEVCREVLEKAGVKPEEVSLVIPHQANVRIINALAEKLNIPKEKVFVNIQKYGNTSAASIPIALHEAIKEGKVKRGDLILMTAMGGGLTWGAVLLRY</sequence>
<name>FABH_AQUAE</name>
<evidence type="ECO:0000255" key="1">
    <source>
        <dbReference type="HAMAP-Rule" id="MF_01815"/>
    </source>
</evidence>
<evidence type="ECO:0000305" key="2"/>
<evidence type="ECO:0007829" key="3">
    <source>
        <dbReference type="PDB" id="2EBD"/>
    </source>
</evidence>
<keyword id="KW-0002">3D-structure</keyword>
<keyword id="KW-0012">Acyltransferase</keyword>
<keyword id="KW-0963">Cytoplasm</keyword>
<keyword id="KW-0275">Fatty acid biosynthesis</keyword>
<keyword id="KW-0276">Fatty acid metabolism</keyword>
<keyword id="KW-0444">Lipid biosynthesis</keyword>
<keyword id="KW-0443">Lipid metabolism</keyword>
<keyword id="KW-0511">Multifunctional enzyme</keyword>
<keyword id="KW-1185">Reference proteome</keyword>
<keyword id="KW-0808">Transferase</keyword>
<comment type="function">
    <text evidence="1">Catalyzes the condensation reaction of fatty acid synthesis by the addition to an acyl acceptor of two carbons from malonyl-ACP. Catalyzes the first condensation reaction which initiates fatty acid synthesis and may therefore play a role in governing the total rate of fatty acid production. Possesses both acetoacetyl-ACP synthase and acetyl transacylase activities. Its substrate specificity determines the biosynthesis of branched-chain and/or straight-chain of fatty acids.</text>
</comment>
<comment type="catalytic activity">
    <reaction evidence="1">
        <text>malonyl-[ACP] + acetyl-CoA + H(+) = 3-oxobutanoyl-[ACP] + CO2 + CoA</text>
        <dbReference type="Rhea" id="RHEA:12080"/>
        <dbReference type="Rhea" id="RHEA-COMP:9623"/>
        <dbReference type="Rhea" id="RHEA-COMP:9625"/>
        <dbReference type="ChEBI" id="CHEBI:15378"/>
        <dbReference type="ChEBI" id="CHEBI:16526"/>
        <dbReference type="ChEBI" id="CHEBI:57287"/>
        <dbReference type="ChEBI" id="CHEBI:57288"/>
        <dbReference type="ChEBI" id="CHEBI:78449"/>
        <dbReference type="ChEBI" id="CHEBI:78450"/>
        <dbReference type="EC" id="2.3.1.180"/>
    </reaction>
</comment>
<comment type="pathway">
    <text evidence="1">Lipid metabolism; fatty acid biosynthesis.</text>
</comment>
<comment type="subunit">
    <text evidence="1">Homodimer.</text>
</comment>
<comment type="subcellular location">
    <subcellularLocation>
        <location evidence="1 2">Cytoplasm</location>
    </subcellularLocation>
</comment>
<comment type="domain">
    <text evidence="1">The last Arg residue of the ACP-binding site is essential for the weak association between ACP/AcpP and FabH.</text>
</comment>
<comment type="similarity">
    <text evidence="1">Belongs to the thiolase-like superfamily. FabH family.</text>
</comment>
<dbReference type="EC" id="2.3.1.180" evidence="1"/>
<dbReference type="EMBL" id="AE000657">
    <property type="protein sequence ID" value="AAC07144.1"/>
    <property type="molecule type" value="Genomic_DNA"/>
</dbReference>
<dbReference type="PIR" id="F70394">
    <property type="entry name" value="F70394"/>
</dbReference>
<dbReference type="RefSeq" id="NP_213748.1">
    <property type="nucleotide sequence ID" value="NC_000918.1"/>
</dbReference>
<dbReference type="RefSeq" id="WP_010880686.1">
    <property type="nucleotide sequence ID" value="NC_000918.1"/>
</dbReference>
<dbReference type="PDB" id="2EBD">
    <property type="method" value="X-ray"/>
    <property type="resolution" value="2.10 A"/>
    <property type="chains" value="A/B=1-309"/>
</dbReference>
<dbReference type="PDBsum" id="2EBD"/>
<dbReference type="SMR" id="O67185"/>
<dbReference type="FunCoup" id="O67185">
    <property type="interactions" value="437"/>
</dbReference>
<dbReference type="STRING" id="224324.aq_1099"/>
<dbReference type="EnsemblBacteria" id="AAC07144">
    <property type="protein sequence ID" value="AAC07144"/>
    <property type="gene ID" value="aq_1099"/>
</dbReference>
<dbReference type="KEGG" id="aae:aq_1099"/>
<dbReference type="PATRIC" id="fig|224324.8.peg.857"/>
<dbReference type="eggNOG" id="COG0332">
    <property type="taxonomic scope" value="Bacteria"/>
</dbReference>
<dbReference type="HOGENOM" id="CLU_039592_3_1_0"/>
<dbReference type="InParanoid" id="O67185"/>
<dbReference type="OrthoDB" id="9815506at2"/>
<dbReference type="UniPathway" id="UPA00094"/>
<dbReference type="EvolutionaryTrace" id="O67185"/>
<dbReference type="Proteomes" id="UP000000798">
    <property type="component" value="Chromosome"/>
</dbReference>
<dbReference type="GO" id="GO:0005737">
    <property type="term" value="C:cytoplasm"/>
    <property type="evidence" value="ECO:0007669"/>
    <property type="project" value="UniProtKB-SubCell"/>
</dbReference>
<dbReference type="GO" id="GO:0004315">
    <property type="term" value="F:3-oxoacyl-[acyl-carrier-protein] synthase activity"/>
    <property type="evidence" value="ECO:0007669"/>
    <property type="project" value="InterPro"/>
</dbReference>
<dbReference type="GO" id="GO:0033818">
    <property type="term" value="F:beta-ketoacyl-acyl-carrier-protein synthase III activity"/>
    <property type="evidence" value="ECO:0007669"/>
    <property type="project" value="UniProtKB-UniRule"/>
</dbReference>
<dbReference type="GO" id="GO:0006633">
    <property type="term" value="P:fatty acid biosynthetic process"/>
    <property type="evidence" value="ECO:0007669"/>
    <property type="project" value="UniProtKB-UniRule"/>
</dbReference>
<dbReference type="CDD" id="cd00830">
    <property type="entry name" value="KAS_III"/>
    <property type="match status" value="1"/>
</dbReference>
<dbReference type="FunFam" id="3.40.47.10:FF:000004">
    <property type="entry name" value="3-oxoacyl-[acyl-carrier-protein] synthase 3"/>
    <property type="match status" value="1"/>
</dbReference>
<dbReference type="Gene3D" id="3.40.47.10">
    <property type="match status" value="1"/>
</dbReference>
<dbReference type="HAMAP" id="MF_01815">
    <property type="entry name" value="FabH"/>
    <property type="match status" value="1"/>
</dbReference>
<dbReference type="InterPro" id="IPR013747">
    <property type="entry name" value="ACP_syn_III_C"/>
</dbReference>
<dbReference type="InterPro" id="IPR013751">
    <property type="entry name" value="ACP_syn_III_N"/>
</dbReference>
<dbReference type="InterPro" id="IPR004655">
    <property type="entry name" value="FabH"/>
</dbReference>
<dbReference type="InterPro" id="IPR016039">
    <property type="entry name" value="Thiolase-like"/>
</dbReference>
<dbReference type="NCBIfam" id="TIGR00747">
    <property type="entry name" value="fabH"/>
    <property type="match status" value="1"/>
</dbReference>
<dbReference type="NCBIfam" id="NF006829">
    <property type="entry name" value="PRK09352.1"/>
    <property type="match status" value="1"/>
</dbReference>
<dbReference type="PANTHER" id="PTHR43091">
    <property type="entry name" value="3-OXOACYL-[ACYL-CARRIER-PROTEIN] SYNTHASE"/>
    <property type="match status" value="1"/>
</dbReference>
<dbReference type="PANTHER" id="PTHR43091:SF1">
    <property type="entry name" value="BETA-KETOACYL-[ACYL-CARRIER-PROTEIN] SYNTHASE III, CHLOROPLASTIC"/>
    <property type="match status" value="1"/>
</dbReference>
<dbReference type="Pfam" id="PF08545">
    <property type="entry name" value="ACP_syn_III"/>
    <property type="match status" value="1"/>
</dbReference>
<dbReference type="Pfam" id="PF08541">
    <property type="entry name" value="ACP_syn_III_C"/>
    <property type="match status" value="1"/>
</dbReference>
<dbReference type="SUPFAM" id="SSF53901">
    <property type="entry name" value="Thiolase-like"/>
    <property type="match status" value="1"/>
</dbReference>
<feature type="chain" id="PRO_0000110392" description="Beta-ketoacyl-[acyl-carrier-protein] synthase III">
    <location>
        <begin position="1"/>
        <end position="309"/>
    </location>
</feature>
<feature type="region of interest" description="ACP-binding" evidence="1">
    <location>
        <begin position="237"/>
        <end position="241"/>
    </location>
</feature>
<feature type="active site" evidence="1">
    <location>
        <position position="111"/>
    </location>
</feature>
<feature type="active site" evidence="1">
    <location>
        <position position="236"/>
    </location>
</feature>
<feature type="active site" evidence="1">
    <location>
        <position position="266"/>
    </location>
</feature>
<feature type="strand" evidence="3">
    <location>
        <begin position="3"/>
        <end position="11"/>
    </location>
</feature>
<feature type="strand" evidence="3">
    <location>
        <begin position="14"/>
        <end position="18"/>
    </location>
</feature>
<feature type="helix" evidence="3">
    <location>
        <begin position="19"/>
        <end position="23"/>
    </location>
</feature>
<feature type="helix" evidence="3">
    <location>
        <begin position="30"/>
        <end position="37"/>
    </location>
</feature>
<feature type="strand" evidence="3">
    <location>
        <begin position="41"/>
        <end position="44"/>
    </location>
</feature>
<feature type="helix" evidence="3">
    <location>
        <begin position="50"/>
        <end position="65"/>
    </location>
</feature>
<feature type="helix" evidence="3">
    <location>
        <begin position="69"/>
        <end position="71"/>
    </location>
</feature>
<feature type="strand" evidence="3">
    <location>
        <begin position="73"/>
        <end position="78"/>
    </location>
</feature>
<feature type="strand" evidence="3">
    <location>
        <begin position="83"/>
        <end position="87"/>
    </location>
</feature>
<feature type="helix" evidence="3">
    <location>
        <begin position="89"/>
        <end position="97"/>
    </location>
</feature>
<feature type="strand" evidence="3">
    <location>
        <begin position="103"/>
        <end position="108"/>
    </location>
</feature>
<feature type="helix" evidence="3">
    <location>
        <begin position="110"/>
        <end position="112"/>
    </location>
</feature>
<feature type="helix" evidence="3">
    <location>
        <begin position="113"/>
        <end position="126"/>
    </location>
</feature>
<feature type="strand" evidence="3">
    <location>
        <begin position="131"/>
        <end position="140"/>
    </location>
</feature>
<feature type="helix" evidence="3">
    <location>
        <begin position="141"/>
        <end position="143"/>
    </location>
</feature>
<feature type="turn" evidence="3">
    <location>
        <begin position="150"/>
        <end position="155"/>
    </location>
</feature>
<feature type="strand" evidence="3">
    <location>
        <begin position="158"/>
        <end position="167"/>
    </location>
</feature>
<feature type="strand" evidence="3">
    <location>
        <begin position="169"/>
        <end position="171"/>
    </location>
</feature>
<feature type="strand" evidence="3">
    <location>
        <begin position="173"/>
        <end position="181"/>
    </location>
</feature>
<feature type="helix" evidence="3">
    <location>
        <begin position="183"/>
        <end position="188"/>
    </location>
</feature>
<feature type="strand" evidence="3">
    <location>
        <begin position="189"/>
        <end position="191"/>
    </location>
</feature>
<feature type="strand" evidence="3">
    <location>
        <begin position="197"/>
        <end position="199"/>
    </location>
</feature>
<feature type="helix" evidence="3">
    <location>
        <begin position="201"/>
        <end position="223"/>
    </location>
</feature>
<feature type="helix" evidence="3">
    <location>
        <begin position="227"/>
        <end position="229"/>
    </location>
</feature>
<feature type="strand" evidence="3">
    <location>
        <begin position="231"/>
        <end position="235"/>
    </location>
</feature>
<feature type="helix" evidence="3">
    <location>
        <begin position="240"/>
        <end position="249"/>
    </location>
</feature>
<feature type="helix" evidence="3">
    <location>
        <begin position="254"/>
        <end position="256"/>
    </location>
</feature>
<feature type="helix" evidence="3">
    <location>
        <begin position="261"/>
        <end position="264"/>
    </location>
</feature>
<feature type="helix" evidence="3">
    <location>
        <begin position="268"/>
        <end position="270"/>
    </location>
</feature>
<feature type="helix" evidence="3">
    <location>
        <begin position="271"/>
        <end position="281"/>
    </location>
</feature>
<feature type="strand" evidence="3">
    <location>
        <begin position="290"/>
        <end position="297"/>
    </location>
</feature>
<feature type="turn" evidence="3">
    <location>
        <begin position="298"/>
        <end position="300"/>
    </location>
</feature>
<feature type="strand" evidence="3">
    <location>
        <begin position="301"/>
        <end position="308"/>
    </location>
</feature>
<accession>O67185</accession>
<gene>
    <name evidence="1" type="primary">fabH</name>
    <name type="ordered locus">aq_1099</name>
</gene>
<organism>
    <name type="scientific">Aquifex aeolicus (strain VF5)</name>
    <dbReference type="NCBI Taxonomy" id="224324"/>
    <lineage>
        <taxon>Bacteria</taxon>
        <taxon>Pseudomonadati</taxon>
        <taxon>Aquificota</taxon>
        <taxon>Aquificia</taxon>
        <taxon>Aquificales</taxon>
        <taxon>Aquificaceae</taxon>
        <taxon>Aquifex</taxon>
    </lineage>
</organism>